<proteinExistence type="inferred from homology"/>
<feature type="chain" id="PRO_0000209878" description="KNR4/SMI1 homolog">
    <location>
        <begin position="1"/>
        <end position="713"/>
    </location>
</feature>
<feature type="region of interest" description="Disordered" evidence="1">
    <location>
        <begin position="18"/>
        <end position="129"/>
    </location>
</feature>
<feature type="region of interest" description="Disordered" evidence="1">
    <location>
        <begin position="255"/>
        <end position="274"/>
    </location>
</feature>
<feature type="region of interest" description="Disordered" evidence="1">
    <location>
        <begin position="400"/>
        <end position="457"/>
    </location>
</feature>
<feature type="region of interest" description="Disordered" evidence="1">
    <location>
        <begin position="500"/>
        <end position="713"/>
    </location>
</feature>
<feature type="compositionally biased region" description="Low complexity" evidence="1">
    <location>
        <begin position="22"/>
        <end position="34"/>
    </location>
</feature>
<feature type="compositionally biased region" description="Polar residues" evidence="1">
    <location>
        <begin position="35"/>
        <end position="65"/>
    </location>
</feature>
<feature type="compositionally biased region" description="Low complexity" evidence="1">
    <location>
        <begin position="66"/>
        <end position="81"/>
    </location>
</feature>
<feature type="compositionally biased region" description="Low complexity" evidence="1">
    <location>
        <begin position="88"/>
        <end position="103"/>
    </location>
</feature>
<feature type="compositionally biased region" description="Polar residues" evidence="1">
    <location>
        <begin position="260"/>
        <end position="270"/>
    </location>
</feature>
<feature type="compositionally biased region" description="Basic and acidic residues" evidence="1">
    <location>
        <begin position="400"/>
        <end position="412"/>
    </location>
</feature>
<feature type="compositionally biased region" description="Low complexity" evidence="1">
    <location>
        <begin position="413"/>
        <end position="429"/>
    </location>
</feature>
<feature type="compositionally biased region" description="Basic and acidic residues" evidence="1">
    <location>
        <begin position="507"/>
        <end position="605"/>
    </location>
</feature>
<feature type="compositionally biased region" description="Basic and acidic residues" evidence="1">
    <location>
        <begin position="613"/>
        <end position="662"/>
    </location>
</feature>
<feature type="compositionally biased region" description="Acidic residues" evidence="1">
    <location>
        <begin position="663"/>
        <end position="686"/>
    </location>
</feature>
<feature type="compositionally biased region" description="Basic residues" evidence="1">
    <location>
        <begin position="701"/>
        <end position="713"/>
    </location>
</feature>
<dbReference type="EMBL" id="CR382128">
    <property type="protein sequence ID" value="CAG83395.1"/>
    <property type="molecule type" value="Genomic_DNA"/>
</dbReference>
<dbReference type="RefSeq" id="XP_501142.1">
    <property type="nucleotide sequence ID" value="XM_501142.1"/>
</dbReference>
<dbReference type="SMR" id="Q6CDX0"/>
<dbReference type="FunCoup" id="Q6CDX0">
    <property type="interactions" value="65"/>
</dbReference>
<dbReference type="STRING" id="284591.Q6CDX0"/>
<dbReference type="EnsemblFungi" id="CAG83395">
    <property type="protein sequence ID" value="CAG83395"/>
    <property type="gene ID" value="YALI0_B20570g"/>
</dbReference>
<dbReference type="KEGG" id="yli:2907368"/>
<dbReference type="VEuPathDB" id="FungiDB:YALI0_B20570g"/>
<dbReference type="HOGENOM" id="CLU_387428_0_0_1"/>
<dbReference type="InParanoid" id="Q6CDX0"/>
<dbReference type="OMA" id="HIGNQIA"/>
<dbReference type="OrthoDB" id="122949at4891"/>
<dbReference type="Proteomes" id="UP000001300">
    <property type="component" value="Chromosome B"/>
</dbReference>
<dbReference type="GO" id="GO:0070880">
    <property type="term" value="P:fungal-type cell wall beta-glucan biosynthetic process"/>
    <property type="evidence" value="ECO:0000318"/>
    <property type="project" value="GO_Central"/>
</dbReference>
<dbReference type="Gene3D" id="3.40.1580.10">
    <property type="entry name" value="SMI1/KNR4-like"/>
    <property type="match status" value="1"/>
</dbReference>
<dbReference type="InterPro" id="IPR009203">
    <property type="entry name" value="Knr4/Smi1"/>
</dbReference>
<dbReference type="InterPro" id="IPR018958">
    <property type="entry name" value="Knr4/Smi1-like_dom"/>
</dbReference>
<dbReference type="InterPro" id="IPR037883">
    <property type="entry name" value="Knr4/Smi1-like_sf"/>
</dbReference>
<dbReference type="InterPro" id="IPR051873">
    <property type="entry name" value="KNR4/SMI1_regulator"/>
</dbReference>
<dbReference type="PANTHER" id="PTHR47432">
    <property type="entry name" value="CELL WALL ASSEMBLY REGULATOR SMI1"/>
    <property type="match status" value="1"/>
</dbReference>
<dbReference type="PANTHER" id="PTHR47432:SF1">
    <property type="entry name" value="CELL WALL ASSEMBLY REGULATOR SMI1"/>
    <property type="match status" value="1"/>
</dbReference>
<dbReference type="Pfam" id="PF09346">
    <property type="entry name" value="SMI1_KNR4"/>
    <property type="match status" value="1"/>
</dbReference>
<dbReference type="PIRSF" id="PIRSF017023">
    <property type="entry name" value="KNR4"/>
    <property type="match status" value="1"/>
</dbReference>
<dbReference type="SMART" id="SM00860">
    <property type="entry name" value="SMI1_KNR4"/>
    <property type="match status" value="1"/>
</dbReference>
<dbReference type="SUPFAM" id="SSF160631">
    <property type="entry name" value="SMI1/KNR4-like"/>
    <property type="match status" value="1"/>
</dbReference>
<reference key="1">
    <citation type="journal article" date="2004" name="Nature">
        <title>Genome evolution in yeasts.</title>
        <authorList>
            <person name="Dujon B."/>
            <person name="Sherman D."/>
            <person name="Fischer G."/>
            <person name="Durrens P."/>
            <person name="Casaregola S."/>
            <person name="Lafontaine I."/>
            <person name="de Montigny J."/>
            <person name="Marck C."/>
            <person name="Neuveglise C."/>
            <person name="Talla E."/>
            <person name="Goffard N."/>
            <person name="Frangeul L."/>
            <person name="Aigle M."/>
            <person name="Anthouard V."/>
            <person name="Babour A."/>
            <person name="Barbe V."/>
            <person name="Barnay S."/>
            <person name="Blanchin S."/>
            <person name="Beckerich J.-M."/>
            <person name="Beyne E."/>
            <person name="Bleykasten C."/>
            <person name="Boisrame A."/>
            <person name="Boyer J."/>
            <person name="Cattolico L."/>
            <person name="Confanioleri F."/>
            <person name="de Daruvar A."/>
            <person name="Despons L."/>
            <person name="Fabre E."/>
            <person name="Fairhead C."/>
            <person name="Ferry-Dumazet H."/>
            <person name="Groppi A."/>
            <person name="Hantraye F."/>
            <person name="Hennequin C."/>
            <person name="Jauniaux N."/>
            <person name="Joyet P."/>
            <person name="Kachouri R."/>
            <person name="Kerrest A."/>
            <person name="Koszul R."/>
            <person name="Lemaire M."/>
            <person name="Lesur I."/>
            <person name="Ma L."/>
            <person name="Muller H."/>
            <person name="Nicaud J.-M."/>
            <person name="Nikolski M."/>
            <person name="Oztas S."/>
            <person name="Ozier-Kalogeropoulos O."/>
            <person name="Pellenz S."/>
            <person name="Potier S."/>
            <person name="Richard G.-F."/>
            <person name="Straub M.-L."/>
            <person name="Suleau A."/>
            <person name="Swennen D."/>
            <person name="Tekaia F."/>
            <person name="Wesolowski-Louvel M."/>
            <person name="Westhof E."/>
            <person name="Wirth B."/>
            <person name="Zeniou-Meyer M."/>
            <person name="Zivanovic Y."/>
            <person name="Bolotin-Fukuhara M."/>
            <person name="Thierry A."/>
            <person name="Bouchier C."/>
            <person name="Caudron B."/>
            <person name="Scarpelli C."/>
            <person name="Gaillardin C."/>
            <person name="Weissenbach J."/>
            <person name="Wincker P."/>
            <person name="Souciet J.-L."/>
        </authorList>
    </citation>
    <scope>NUCLEOTIDE SEQUENCE [LARGE SCALE GENOMIC DNA]</scope>
    <source>
        <strain>CLIB 122 / E 150</strain>
    </source>
</reference>
<comment type="similarity">
    <text evidence="2">Belongs to the KNR4/SMI1 family.</text>
</comment>
<accession>Q6CDX0</accession>
<keyword id="KW-1185">Reference proteome</keyword>
<evidence type="ECO:0000256" key="1">
    <source>
        <dbReference type="SAM" id="MobiDB-lite"/>
    </source>
</evidence>
<evidence type="ECO:0000305" key="2"/>
<name>SMI1_YARLI</name>
<organism>
    <name type="scientific">Yarrowia lipolytica (strain CLIB 122 / E 150)</name>
    <name type="common">Yeast</name>
    <name type="synonym">Candida lipolytica</name>
    <dbReference type="NCBI Taxonomy" id="284591"/>
    <lineage>
        <taxon>Eukaryota</taxon>
        <taxon>Fungi</taxon>
        <taxon>Dikarya</taxon>
        <taxon>Ascomycota</taxon>
        <taxon>Saccharomycotina</taxon>
        <taxon>Dipodascomycetes</taxon>
        <taxon>Dipodascales</taxon>
        <taxon>Dipodascales incertae sedis</taxon>
        <taxon>Yarrowia</taxon>
    </lineage>
</organism>
<sequence>MNSFFNSVSDFIHSVTTPDRYASQQRSSKASQSAGANSQNRPLYNNDDNQSEMYQASSSYTGGYTNSPSASSSNLAGGAAADRANPYSSRNNSTTNFSASSTSVNKAPYAPGSRSSAIGNNDPAGVTRDSHELQEYVDGQPPAPSVAMSWERIDKWADEHYPELNDQLCYPATASDLNELEADLDCSLPLDVRDSCLIHDGQEKFGRPSGIIFGITLLDLETIAEEWYSWKKAAIRINREIARATGQTPTKQGGIFINPNAGSPNSSTPGSPVASVARQKNISSWLASQDSVPEGAVQLVYAHPGWIPLANDRAGNNIAVDLAPGKKGKWGQVILFGREFDRKYVVAQSWAHFLAMVADDFDRGNWEVDHDTEELWFKTDRGTFVSYFTVLKTRVERQFRHQMQRREHERRQAAAAAQQQQQQQQHHAQGGLHSPSPQHTQSMPAPGLGKPLTSKPAQDLDIVDLNEDTATIKDKGKATMGSALRKTIVDESKTAHTIVEPLEESEEIKGKGKGKEEDVNEAAEKAKVEATEKTKKAAKEAADKEAELKKAAEKAAEEKAKAEKKAAEAREKEEKEAKAAAKAKEEELKKEEVAKAAAKAEEEQKATAAAEAAKAEAKRAAEADASKKVEAEKAAAEESKESKAESEESKVERDLEELKIDEENGNAEEADEEADDDDEDDEEEGDSKEGEETKSTTASKSKSKKKNKKKGKK</sequence>
<gene>
    <name type="ordered locus">YALI0B20570g</name>
</gene>
<protein>
    <recommendedName>
        <fullName>KNR4/SMI1 homolog</fullName>
    </recommendedName>
</protein>